<organism>
    <name type="scientific">Streptomyces tendae</name>
    <dbReference type="NCBI Taxonomy" id="1932"/>
    <lineage>
        <taxon>Bacteria</taxon>
        <taxon>Bacillati</taxon>
        <taxon>Actinomycetota</taxon>
        <taxon>Actinomycetes</taxon>
        <taxon>Kitasatosporales</taxon>
        <taxon>Streptomycetaceae</taxon>
        <taxon>Streptomyces</taxon>
    </lineage>
</organism>
<accession>Q9X9Q0</accession>
<gene>
    <name evidence="4" type="primary">nikb</name>
</gene>
<feature type="chain" id="PRO_0000387926" description="4-hydroxy-2-oxovalerate aldolase">
    <location>
        <begin position="1"/>
        <end position="357"/>
    </location>
</feature>
<feature type="domain" description="Pyruvate carboxyltransferase" evidence="1">
    <location>
        <begin position="15"/>
        <end position="265"/>
    </location>
</feature>
<feature type="region of interest" description="Disordered" evidence="2">
    <location>
        <begin position="1"/>
        <end position="21"/>
    </location>
</feature>
<feature type="active site" description="Proton acceptor" evidence="1">
    <location>
        <position position="27"/>
    </location>
</feature>
<feature type="binding site" evidence="1">
    <location>
        <begin position="23"/>
        <end position="24"/>
    </location>
    <ligand>
        <name>substrate</name>
    </ligand>
</feature>
<feature type="binding site" evidence="1">
    <location>
        <position position="24"/>
    </location>
    <ligand>
        <name>Mn(2+)</name>
        <dbReference type="ChEBI" id="CHEBI:29035"/>
    </ligand>
</feature>
<feature type="binding site" evidence="1">
    <location>
        <position position="177"/>
    </location>
    <ligand>
        <name>substrate</name>
    </ligand>
</feature>
<feature type="binding site" evidence="1">
    <location>
        <position position="204"/>
    </location>
    <ligand>
        <name>Mn(2+)</name>
        <dbReference type="ChEBI" id="CHEBI:29035"/>
    </ligand>
</feature>
<feature type="binding site" evidence="1">
    <location>
        <position position="204"/>
    </location>
    <ligand>
        <name>substrate</name>
    </ligand>
</feature>
<feature type="binding site" evidence="1">
    <location>
        <position position="206"/>
    </location>
    <ligand>
        <name>Mn(2+)</name>
        <dbReference type="ChEBI" id="CHEBI:29035"/>
    </ligand>
</feature>
<feature type="site" description="Transition state stabilizer" evidence="1">
    <location>
        <position position="23"/>
    </location>
</feature>
<protein>
    <recommendedName>
        <fullName evidence="1">4-hydroxy-2-oxovalerate aldolase</fullName>
        <shortName evidence="1">HOA</shortName>
        <ecNumber evidence="1">4.1.3.39</ecNumber>
    </recommendedName>
    <alternativeName>
        <fullName evidence="1">4-hydroxy-2-keto-pentanoic acid aldolase</fullName>
    </alternativeName>
    <alternativeName>
        <fullName evidence="1">4-hydroxy-2-oxopentanoate aldolase</fullName>
    </alternativeName>
</protein>
<keyword id="KW-0058">Aromatic hydrocarbons catabolism</keyword>
<keyword id="KW-0456">Lyase</keyword>
<keyword id="KW-0464">Manganese</keyword>
<keyword id="KW-0479">Metal-binding</keyword>
<reference key="1">
    <citation type="journal article" date="1999" name="Mol. Gen. Genet.">
        <title>Molecular characterization of co-transcribed genes from Streptomyces tendae Tu901 involved in the biosynthesis of the peptidyl moiety of the peptidyl nucleoside antibiotic nikkomycin.</title>
        <authorList>
            <person name="Bruntner C."/>
            <person name="Lauer B."/>
            <person name="Schwarz W."/>
            <person name="Mohrle V."/>
            <person name="Bormann C."/>
        </authorList>
    </citation>
    <scope>NUCLEOTIDE SEQUENCE [GENOMIC DNA]</scope>
    <scope>FUNCTION</scope>
    <source>
        <strain>Tue901</strain>
    </source>
</reference>
<proteinExistence type="inferred from homology"/>
<name>HOA_STRTE</name>
<evidence type="ECO:0000255" key="1">
    <source>
        <dbReference type="HAMAP-Rule" id="MF_01656"/>
    </source>
</evidence>
<evidence type="ECO:0000256" key="2">
    <source>
        <dbReference type="SAM" id="MobiDB-lite"/>
    </source>
</evidence>
<evidence type="ECO:0000269" key="3">
    <source>
    </source>
</evidence>
<evidence type="ECO:0000303" key="4">
    <source>
    </source>
</evidence>
<comment type="function">
    <text evidence="3">Involved in the biosynthesis of the peptidyl nucleoside antibiotic nikkomycin.</text>
</comment>
<comment type="catalytic activity">
    <reaction evidence="1">
        <text>(S)-4-hydroxy-2-oxopentanoate = acetaldehyde + pyruvate</text>
        <dbReference type="Rhea" id="RHEA:22624"/>
        <dbReference type="ChEBI" id="CHEBI:15343"/>
        <dbReference type="ChEBI" id="CHEBI:15361"/>
        <dbReference type="ChEBI" id="CHEBI:73143"/>
        <dbReference type="EC" id="4.1.3.39"/>
    </reaction>
</comment>
<comment type="similarity">
    <text evidence="1">Belongs to the 4-hydroxy-2-oxovalerate aldolase family.</text>
</comment>
<sequence>MSQEAARDAAAGRPVQIHDPTLRDGQHAVRHSLGAEQFRAYLKAADAAAVPVVEVGHGNGLAASSLQVGRARLSDDEMMSIARETLTTSKLGVLMFPGWATTQDIKNALAYEVDLVRIATHCTEASVAERHLGFLRDEGVEAHGMVVMTHMASPDQLAEECARLVGYGATGVGILDSSGHFLPSDVTARIGAICAAVDVPVMFHGHNNLGMAVANSIAAAQAGAGILDACARGFGAGAGNTQLEVLVPVLERLGFRTGIDLYRLLDAADIAGRELMPAPPTIDSVSIVSGLAGVFSGFKKPVLDIAAREGVDPRDIFFELGRRQVVAGQEDLIVEVALALRAARDGASPASSGTGPC</sequence>
<dbReference type="EC" id="4.1.3.39" evidence="1"/>
<dbReference type="EMBL" id="Y18574">
    <property type="protein sequence ID" value="CAB46532.1"/>
    <property type="molecule type" value="Genomic_DNA"/>
</dbReference>
<dbReference type="SMR" id="Q9X9Q0"/>
<dbReference type="GO" id="GO:0003852">
    <property type="term" value="F:2-isopropylmalate synthase activity"/>
    <property type="evidence" value="ECO:0007669"/>
    <property type="project" value="TreeGrafter"/>
</dbReference>
<dbReference type="GO" id="GO:0008701">
    <property type="term" value="F:4-hydroxy-2-oxovalerate aldolase activity"/>
    <property type="evidence" value="ECO:0007669"/>
    <property type="project" value="UniProtKB-UniRule"/>
</dbReference>
<dbReference type="GO" id="GO:0030145">
    <property type="term" value="F:manganese ion binding"/>
    <property type="evidence" value="ECO:0007669"/>
    <property type="project" value="UniProtKB-UniRule"/>
</dbReference>
<dbReference type="GO" id="GO:0009056">
    <property type="term" value="P:catabolic process"/>
    <property type="evidence" value="ECO:0007669"/>
    <property type="project" value="UniProtKB-KW"/>
</dbReference>
<dbReference type="GO" id="GO:0009098">
    <property type="term" value="P:L-leucine biosynthetic process"/>
    <property type="evidence" value="ECO:0007669"/>
    <property type="project" value="TreeGrafter"/>
</dbReference>
<dbReference type="CDD" id="cd07943">
    <property type="entry name" value="DRE_TIM_HOA"/>
    <property type="match status" value="1"/>
</dbReference>
<dbReference type="Gene3D" id="1.10.8.60">
    <property type="match status" value="1"/>
</dbReference>
<dbReference type="Gene3D" id="3.20.20.70">
    <property type="entry name" value="Aldolase class I"/>
    <property type="match status" value="1"/>
</dbReference>
<dbReference type="HAMAP" id="MF_01656">
    <property type="entry name" value="HOA"/>
    <property type="match status" value="1"/>
</dbReference>
<dbReference type="InterPro" id="IPR050073">
    <property type="entry name" value="2-IPM_HCS-like"/>
</dbReference>
<dbReference type="InterPro" id="IPR017629">
    <property type="entry name" value="4OH_2_O-val_aldolase"/>
</dbReference>
<dbReference type="InterPro" id="IPR013785">
    <property type="entry name" value="Aldolase_TIM"/>
</dbReference>
<dbReference type="InterPro" id="IPR012425">
    <property type="entry name" value="DmpG_comm"/>
</dbReference>
<dbReference type="InterPro" id="IPR035685">
    <property type="entry name" value="DRE_TIM_HOA"/>
</dbReference>
<dbReference type="InterPro" id="IPR000891">
    <property type="entry name" value="PYR_CT"/>
</dbReference>
<dbReference type="NCBIfam" id="TIGR03217">
    <property type="entry name" value="4OH_2_O_val_ald"/>
    <property type="match status" value="1"/>
</dbReference>
<dbReference type="NCBIfam" id="NF006049">
    <property type="entry name" value="PRK08195.1"/>
    <property type="match status" value="1"/>
</dbReference>
<dbReference type="PANTHER" id="PTHR10277:SF9">
    <property type="entry name" value="2-ISOPROPYLMALATE SYNTHASE 1, CHLOROPLASTIC-RELATED"/>
    <property type="match status" value="1"/>
</dbReference>
<dbReference type="PANTHER" id="PTHR10277">
    <property type="entry name" value="HOMOCITRATE SYNTHASE-RELATED"/>
    <property type="match status" value="1"/>
</dbReference>
<dbReference type="Pfam" id="PF07836">
    <property type="entry name" value="DmpG_comm"/>
    <property type="match status" value="1"/>
</dbReference>
<dbReference type="Pfam" id="PF00682">
    <property type="entry name" value="HMGL-like"/>
    <property type="match status" value="1"/>
</dbReference>
<dbReference type="SUPFAM" id="SSF51569">
    <property type="entry name" value="Aldolase"/>
    <property type="match status" value="1"/>
</dbReference>
<dbReference type="SUPFAM" id="SSF89000">
    <property type="entry name" value="post-HMGL domain-like"/>
    <property type="match status" value="1"/>
</dbReference>
<dbReference type="PROSITE" id="PS50991">
    <property type="entry name" value="PYR_CT"/>
    <property type="match status" value="1"/>
</dbReference>